<gene>
    <name evidence="1" type="primary">lpxB</name>
    <name type="ordered locus">BWG_0174</name>
</gene>
<dbReference type="EC" id="2.4.1.182" evidence="1"/>
<dbReference type="EMBL" id="CP001396">
    <property type="protein sequence ID" value="ACR65628.1"/>
    <property type="molecule type" value="Genomic_DNA"/>
</dbReference>
<dbReference type="RefSeq" id="WP_000139654.1">
    <property type="nucleotide sequence ID" value="NC_012759.1"/>
</dbReference>
<dbReference type="SMR" id="C4ZRS4"/>
<dbReference type="CAZy" id="GT19">
    <property type="family name" value="Glycosyltransferase Family 19"/>
</dbReference>
<dbReference type="GeneID" id="93777243"/>
<dbReference type="KEGG" id="ebw:BWG_0174"/>
<dbReference type="HOGENOM" id="CLU_036577_3_0_6"/>
<dbReference type="UniPathway" id="UPA00359">
    <property type="reaction ID" value="UER00481"/>
</dbReference>
<dbReference type="GO" id="GO:0016020">
    <property type="term" value="C:membrane"/>
    <property type="evidence" value="ECO:0007669"/>
    <property type="project" value="GOC"/>
</dbReference>
<dbReference type="GO" id="GO:0008915">
    <property type="term" value="F:lipid-A-disaccharide synthase activity"/>
    <property type="evidence" value="ECO:0007669"/>
    <property type="project" value="UniProtKB-UniRule"/>
</dbReference>
<dbReference type="GO" id="GO:0005543">
    <property type="term" value="F:phospholipid binding"/>
    <property type="evidence" value="ECO:0007669"/>
    <property type="project" value="TreeGrafter"/>
</dbReference>
<dbReference type="GO" id="GO:0009245">
    <property type="term" value="P:lipid A biosynthetic process"/>
    <property type="evidence" value="ECO:0007669"/>
    <property type="project" value="UniProtKB-UniRule"/>
</dbReference>
<dbReference type="CDD" id="cd01635">
    <property type="entry name" value="Glycosyltransferase_GTB-type"/>
    <property type="match status" value="1"/>
</dbReference>
<dbReference type="HAMAP" id="MF_00392">
    <property type="entry name" value="LpxB"/>
    <property type="match status" value="1"/>
</dbReference>
<dbReference type="InterPro" id="IPR003835">
    <property type="entry name" value="Glyco_trans_19"/>
</dbReference>
<dbReference type="NCBIfam" id="TIGR00215">
    <property type="entry name" value="lpxB"/>
    <property type="match status" value="1"/>
</dbReference>
<dbReference type="PANTHER" id="PTHR30372">
    <property type="entry name" value="LIPID-A-DISACCHARIDE SYNTHASE"/>
    <property type="match status" value="1"/>
</dbReference>
<dbReference type="PANTHER" id="PTHR30372:SF4">
    <property type="entry name" value="LIPID-A-DISACCHARIDE SYNTHASE, MITOCHONDRIAL-RELATED"/>
    <property type="match status" value="1"/>
</dbReference>
<dbReference type="Pfam" id="PF02684">
    <property type="entry name" value="LpxB"/>
    <property type="match status" value="1"/>
</dbReference>
<dbReference type="SUPFAM" id="SSF53756">
    <property type="entry name" value="UDP-Glycosyltransferase/glycogen phosphorylase"/>
    <property type="match status" value="1"/>
</dbReference>
<feature type="chain" id="PRO_1000205844" description="Lipid-A-disaccharide synthase">
    <location>
        <begin position="1"/>
        <end position="382"/>
    </location>
</feature>
<name>LPXB_ECOBW</name>
<keyword id="KW-0328">Glycosyltransferase</keyword>
<keyword id="KW-0441">Lipid A biosynthesis</keyword>
<keyword id="KW-0444">Lipid biosynthesis</keyword>
<keyword id="KW-0443">Lipid metabolism</keyword>
<keyword id="KW-0808">Transferase</keyword>
<accession>C4ZRS4</accession>
<proteinExistence type="inferred from homology"/>
<evidence type="ECO:0000255" key="1">
    <source>
        <dbReference type="HAMAP-Rule" id="MF_00392"/>
    </source>
</evidence>
<reference key="1">
    <citation type="journal article" date="2009" name="J. Bacteriol.">
        <title>Genomic sequencing reveals regulatory mutations and recombinational events in the widely used MC4100 lineage of Escherichia coli K-12.</title>
        <authorList>
            <person name="Ferenci T."/>
            <person name="Zhou Z."/>
            <person name="Betteridge T."/>
            <person name="Ren Y."/>
            <person name="Liu Y."/>
            <person name="Feng L."/>
            <person name="Reeves P.R."/>
            <person name="Wang L."/>
        </authorList>
    </citation>
    <scope>NUCLEOTIDE SEQUENCE [LARGE SCALE GENOMIC DNA]</scope>
    <source>
        <strain>K12 / MC4100 / BW2952</strain>
    </source>
</reference>
<protein>
    <recommendedName>
        <fullName evidence="1">Lipid-A-disaccharide synthase</fullName>
        <ecNumber evidence="1">2.4.1.182</ecNumber>
    </recommendedName>
</protein>
<sequence length="382" mass="42382">MTEQRPLTIALVAGETSGDILGAGLIRALKEHVPNARFVGVAGPRMQAEGCEAWYEMEELAVMGIVEVLGRLRRLLHIRADLTKRFGELKPDVFVGIDAPDFNITLEGNLKKQGIKTIHYVSPSVWAWRQKRVFKIGRATDLVLAFLPFEKAFYDKYNVPCRFIGHTMADAMPLDPDKNAARDVLGIPHDAHCLALLPGSRGAEVEMLSADFLKTAQLLRQTYPDLEIVVPLVNAKRREQFERIKAEVAPDLSVHLLDGMGREAMVASDAALLASGTAALECMLAKCPMVVGYRMKPFTFWLAKRLVKTDYVSLPNLLAGRELVKELLQEECEPQKLAAALLPLLANGKTSHAMHDTFRELHQQIRCNADEQAAQAVLELAQ</sequence>
<organism>
    <name type="scientific">Escherichia coli (strain K12 / MC4100 / BW2952)</name>
    <dbReference type="NCBI Taxonomy" id="595496"/>
    <lineage>
        <taxon>Bacteria</taxon>
        <taxon>Pseudomonadati</taxon>
        <taxon>Pseudomonadota</taxon>
        <taxon>Gammaproteobacteria</taxon>
        <taxon>Enterobacterales</taxon>
        <taxon>Enterobacteriaceae</taxon>
        <taxon>Escherichia</taxon>
    </lineage>
</organism>
<comment type="function">
    <text evidence="1">Condensation of UDP-2,3-diacylglucosamine and 2,3-diacylglucosamine-1-phosphate to form lipid A disaccharide, a precursor of lipid A, a phosphorylated glycolipid that anchors the lipopolysaccharide to the outer membrane of the cell.</text>
</comment>
<comment type="catalytic activity">
    <reaction evidence="1">
        <text>2-N,3-O-bis[(3R)-3-hydroxytetradecanoyl]-alpha-D-glucosaminyl 1-phosphate + UDP-2-N,3-O-bis[(3R)-3-hydroxytetradecanoyl]-alpha-D-glucosamine = lipid A disaccharide (E. coli) + UDP + H(+)</text>
        <dbReference type="Rhea" id="RHEA:22668"/>
        <dbReference type="ChEBI" id="CHEBI:15378"/>
        <dbReference type="ChEBI" id="CHEBI:57957"/>
        <dbReference type="ChEBI" id="CHEBI:58223"/>
        <dbReference type="ChEBI" id="CHEBI:58466"/>
        <dbReference type="ChEBI" id="CHEBI:78847"/>
    </reaction>
</comment>
<comment type="catalytic activity">
    <reaction evidence="1">
        <text>a lipid X + a UDP-2-N,3-O-bis[(3R)-3-hydroxyacyl]-alpha-D-glucosamine = a lipid A disaccharide + UDP + H(+)</text>
        <dbReference type="Rhea" id="RHEA:67828"/>
        <dbReference type="ChEBI" id="CHEBI:15378"/>
        <dbReference type="ChEBI" id="CHEBI:58223"/>
        <dbReference type="ChEBI" id="CHEBI:137748"/>
        <dbReference type="ChEBI" id="CHEBI:176338"/>
        <dbReference type="ChEBI" id="CHEBI:176343"/>
        <dbReference type="EC" id="2.4.1.182"/>
    </reaction>
</comment>
<comment type="pathway">
    <text evidence="1">Glycolipid biosynthesis; lipid IV(A) biosynthesis; lipid IV(A) from (3R)-3-hydroxytetradecanoyl-[acyl-carrier-protein] and UDP-N-acetyl-alpha-D-glucosamine: step 5/6.</text>
</comment>
<comment type="similarity">
    <text evidence="1">Belongs to the LpxB family.</text>
</comment>